<feature type="signal peptide" evidence="2">
    <location>
        <begin position="1"/>
        <end position="17"/>
    </location>
</feature>
<feature type="propeptide" id="PRO_0000388456" evidence="1">
    <location>
        <begin position="18"/>
        <end position="182"/>
    </location>
</feature>
<feature type="chain" id="PRO_0000388457" description="Probable neutral protease 2 homolog MCYG_04257">
    <location>
        <begin position="183"/>
        <end position="360"/>
    </location>
</feature>
<feature type="active site" evidence="3">
    <location>
        <position position="312"/>
    </location>
</feature>
<feature type="binding site" evidence="3">
    <location>
        <position position="311"/>
    </location>
    <ligand>
        <name>Zn(2+)</name>
        <dbReference type="ChEBI" id="CHEBI:29105"/>
        <note>catalytic</note>
    </ligand>
</feature>
<feature type="binding site" evidence="3">
    <location>
        <position position="315"/>
    </location>
    <ligand>
        <name>Zn(2+)</name>
        <dbReference type="ChEBI" id="CHEBI:29105"/>
        <note>catalytic</note>
    </ligand>
</feature>
<feature type="binding site" evidence="3">
    <location>
        <position position="326"/>
    </location>
    <ligand>
        <name>Zn(2+)</name>
        <dbReference type="ChEBI" id="CHEBI:29105"/>
        <note>catalytic</note>
    </ligand>
</feature>
<feature type="glycosylation site" description="N-linked (GlcNAc...) asparagine" evidence="2">
    <location>
        <position position="262"/>
    </location>
</feature>
<feature type="disulfide bond" evidence="1">
    <location>
        <begin position="190"/>
        <end position="261"/>
    </location>
</feature>
<feature type="disulfide bond" evidence="1">
    <location>
        <begin position="268"/>
        <end position="286"/>
    </location>
</feature>
<feature type="disulfide bond" evidence="1">
    <location>
        <begin position="300"/>
        <end position="360"/>
    </location>
</feature>
<comment type="function">
    <text evidence="1">Probable secreted metalloprotease that shows high activities on basic nuclear substrates such as histone and protamine (By similarity). May be involved in virulence.</text>
</comment>
<comment type="catalytic activity">
    <reaction>
        <text>Preferential cleavage of bonds with hydrophobic residues in P1'. Also 3-Asn-|-Gln-4 and 8-Gly-|-Ser-9 bonds in insulin B chain.</text>
        <dbReference type="EC" id="3.4.24.39"/>
    </reaction>
</comment>
<comment type="cofactor">
    <cofactor evidence="1">
        <name>Zn(2+)</name>
        <dbReference type="ChEBI" id="CHEBI:29105"/>
    </cofactor>
    <text evidence="1">Binds 1 zinc ion per subunit.</text>
</comment>
<comment type="subcellular location">
    <subcellularLocation>
        <location evidence="4">Secreted</location>
    </subcellularLocation>
</comment>
<comment type="similarity">
    <text evidence="4">Belongs to the peptidase M35 family.</text>
</comment>
<sequence length="360" mass="38421">MQLIAFLAALGVPVAFAATIPSVPLNHSMIDVKLSAAGNSMVKATITNNGDRALNLLRFNTIMDEHPTRKVMVYQNGAEVQFTGMLPRYMMSNLTPDYFVSLGPKASVEHSFDLAATHDLSRGGKITVMAQGTVPTAEEHGTTITGHTVYESNKITMEVDGNKAAAVVQAMGKVKAGSIDKRSKVVTSSCHGNQLQVLQTALANSARLSQAAAKAAQSNPRKLQEYFKATDSGTVQKVVSRFMSVARESSSNSAGGTTYYCNDSMGGCHPGVLAYTLPSQNLVVNCPIYYSDIPALNKRCHGQDQATTTLHEFTHNPAVVSPFAQDLGYGYDRVAALPASKAIQNADTYALFANAIYVGC</sequence>
<keyword id="KW-0165">Cleavage on pair of basic residues</keyword>
<keyword id="KW-1015">Disulfide bond</keyword>
<keyword id="KW-0325">Glycoprotein</keyword>
<keyword id="KW-0378">Hydrolase</keyword>
<keyword id="KW-0479">Metal-binding</keyword>
<keyword id="KW-0482">Metalloprotease</keyword>
<keyword id="KW-0645">Protease</keyword>
<keyword id="KW-1185">Reference proteome</keyword>
<keyword id="KW-0964">Secreted</keyword>
<keyword id="KW-0732">Signal</keyword>
<keyword id="KW-0843">Virulence</keyword>
<keyword id="KW-0862">Zinc</keyword>
<keyword id="KW-0865">Zymogen</keyword>
<organism>
    <name type="scientific">Arthroderma otae (strain ATCC MYA-4605 / CBS 113480)</name>
    <name type="common">Microsporum canis</name>
    <dbReference type="NCBI Taxonomy" id="554155"/>
    <lineage>
        <taxon>Eukaryota</taxon>
        <taxon>Fungi</taxon>
        <taxon>Dikarya</taxon>
        <taxon>Ascomycota</taxon>
        <taxon>Pezizomycotina</taxon>
        <taxon>Eurotiomycetes</taxon>
        <taxon>Eurotiomycetidae</taxon>
        <taxon>Onygenales</taxon>
        <taxon>Arthrodermataceae</taxon>
        <taxon>Microsporum</taxon>
    </lineage>
</organism>
<proteinExistence type="inferred from homology"/>
<accession>C5FPC2</accession>
<evidence type="ECO:0000250" key="1"/>
<evidence type="ECO:0000255" key="2"/>
<evidence type="ECO:0000255" key="3">
    <source>
        <dbReference type="PROSITE-ProRule" id="PRU10095"/>
    </source>
</evidence>
<evidence type="ECO:0000305" key="4"/>
<name>NPIIC_ARTOC</name>
<protein>
    <recommendedName>
        <fullName>Probable neutral protease 2 homolog MCYG_04257</fullName>
        <ecNumber>3.4.24.39</ecNumber>
    </recommendedName>
    <alternativeName>
        <fullName>Deuterolysin MCYG_04257</fullName>
    </alternativeName>
</protein>
<dbReference type="EC" id="3.4.24.39"/>
<dbReference type="EMBL" id="DS995704">
    <property type="protein sequence ID" value="EEQ31438.1"/>
    <property type="molecule type" value="Genomic_DNA"/>
</dbReference>
<dbReference type="RefSeq" id="XP_002846520.1">
    <property type="nucleotide sequence ID" value="XM_002846474.1"/>
</dbReference>
<dbReference type="SMR" id="C5FPC2"/>
<dbReference type="STRING" id="554155.C5FPC2"/>
<dbReference type="MEROPS" id="M35.001"/>
<dbReference type="GeneID" id="9224590"/>
<dbReference type="VEuPathDB" id="FungiDB:MCYG_04257"/>
<dbReference type="eggNOG" id="ENOG502SGF5">
    <property type="taxonomic scope" value="Eukaryota"/>
</dbReference>
<dbReference type="HOGENOM" id="CLU_039313_1_0_1"/>
<dbReference type="OMA" id="NHSMIDV"/>
<dbReference type="OrthoDB" id="412874at2759"/>
<dbReference type="Proteomes" id="UP000002035">
    <property type="component" value="Unassembled WGS sequence"/>
</dbReference>
<dbReference type="GO" id="GO:0005576">
    <property type="term" value="C:extracellular region"/>
    <property type="evidence" value="ECO:0007669"/>
    <property type="project" value="UniProtKB-SubCell"/>
</dbReference>
<dbReference type="GO" id="GO:0046872">
    <property type="term" value="F:metal ion binding"/>
    <property type="evidence" value="ECO:0007669"/>
    <property type="project" value="UniProtKB-KW"/>
</dbReference>
<dbReference type="GO" id="GO:0004222">
    <property type="term" value="F:metalloendopeptidase activity"/>
    <property type="evidence" value="ECO:0007669"/>
    <property type="project" value="InterPro"/>
</dbReference>
<dbReference type="GO" id="GO:0006508">
    <property type="term" value="P:proteolysis"/>
    <property type="evidence" value="ECO:0007669"/>
    <property type="project" value="UniProtKB-KW"/>
</dbReference>
<dbReference type="CDD" id="cd11008">
    <property type="entry name" value="M35_deuterolysin_like"/>
    <property type="match status" value="1"/>
</dbReference>
<dbReference type="Gene3D" id="2.60.40.2970">
    <property type="match status" value="1"/>
</dbReference>
<dbReference type="Gene3D" id="3.40.390.10">
    <property type="entry name" value="Collagenase (Catalytic Domain)"/>
    <property type="match status" value="1"/>
</dbReference>
<dbReference type="InterPro" id="IPR050414">
    <property type="entry name" value="Fungal_M35_metalloproteases"/>
</dbReference>
<dbReference type="InterPro" id="IPR024079">
    <property type="entry name" value="MetalloPept_cat_dom_sf"/>
</dbReference>
<dbReference type="InterPro" id="IPR001384">
    <property type="entry name" value="Peptidase_M35"/>
</dbReference>
<dbReference type="PANTHER" id="PTHR37016">
    <property type="match status" value="1"/>
</dbReference>
<dbReference type="PANTHER" id="PTHR37016:SF7">
    <property type="entry name" value="NEUTRAL PROTEASE 2"/>
    <property type="match status" value="1"/>
</dbReference>
<dbReference type="Pfam" id="PF02102">
    <property type="entry name" value="Peptidase_M35"/>
    <property type="match status" value="1"/>
</dbReference>
<dbReference type="PRINTS" id="PR00768">
    <property type="entry name" value="DEUTEROLYSIN"/>
</dbReference>
<dbReference type="SUPFAM" id="SSF55486">
    <property type="entry name" value="Metalloproteases ('zincins'), catalytic domain"/>
    <property type="match status" value="1"/>
</dbReference>
<dbReference type="PROSITE" id="PS00142">
    <property type="entry name" value="ZINC_PROTEASE"/>
    <property type="match status" value="1"/>
</dbReference>
<gene>
    <name type="ORF">MCYG_04257</name>
</gene>
<reference key="1">
    <citation type="journal article" date="2012" name="MBio">
        <title>Comparative genome analysis of Trichophyton rubrum and related dermatophytes reveals candidate genes involved in infection.</title>
        <authorList>
            <person name="Martinez D.A."/>
            <person name="Oliver B.G."/>
            <person name="Graeser Y."/>
            <person name="Goldberg J.M."/>
            <person name="Li W."/>
            <person name="Martinez-Rossi N.M."/>
            <person name="Monod M."/>
            <person name="Shelest E."/>
            <person name="Barton R.C."/>
            <person name="Birch E."/>
            <person name="Brakhage A.A."/>
            <person name="Chen Z."/>
            <person name="Gurr S.J."/>
            <person name="Heiman D."/>
            <person name="Heitman J."/>
            <person name="Kosti I."/>
            <person name="Rossi A."/>
            <person name="Saif S."/>
            <person name="Samalova M."/>
            <person name="Saunders C.W."/>
            <person name="Shea T."/>
            <person name="Summerbell R.C."/>
            <person name="Xu J."/>
            <person name="Young S."/>
            <person name="Zeng Q."/>
            <person name="Birren B.W."/>
            <person name="Cuomo C.A."/>
            <person name="White T.C."/>
        </authorList>
    </citation>
    <scope>NUCLEOTIDE SEQUENCE [LARGE SCALE GENOMIC DNA]</scope>
    <source>
        <strain>ATCC MYA-4605 / CBS 113480</strain>
    </source>
</reference>